<protein>
    <recommendedName>
        <fullName evidence="1">ATP synthase subunit beta</fullName>
        <ecNumber evidence="1">7.1.2.2</ecNumber>
    </recommendedName>
    <alternativeName>
        <fullName evidence="1">ATP synthase F1 sector subunit beta</fullName>
    </alternativeName>
    <alternativeName>
        <fullName evidence="1">F-ATPase subunit beta</fullName>
    </alternativeName>
</protein>
<gene>
    <name evidence="1" type="primary">atpD</name>
    <name type="ordered locus">XCV3767</name>
</gene>
<keyword id="KW-0066">ATP synthesis</keyword>
<keyword id="KW-0067">ATP-binding</keyword>
<keyword id="KW-0997">Cell inner membrane</keyword>
<keyword id="KW-1003">Cell membrane</keyword>
<keyword id="KW-0139">CF(1)</keyword>
<keyword id="KW-0375">Hydrogen ion transport</keyword>
<keyword id="KW-0406">Ion transport</keyword>
<keyword id="KW-0472">Membrane</keyword>
<keyword id="KW-0547">Nucleotide-binding</keyword>
<keyword id="KW-1278">Translocase</keyword>
<keyword id="KW-0813">Transport</keyword>
<proteinExistence type="inferred from homology"/>
<feature type="chain" id="PRO_0000254430" description="ATP synthase subunit beta">
    <location>
        <begin position="1"/>
        <end position="468"/>
    </location>
</feature>
<feature type="binding site" evidence="1">
    <location>
        <begin position="148"/>
        <end position="155"/>
    </location>
    <ligand>
        <name>ATP</name>
        <dbReference type="ChEBI" id="CHEBI:30616"/>
    </ligand>
</feature>
<organism>
    <name type="scientific">Xanthomonas euvesicatoria pv. vesicatoria (strain 85-10)</name>
    <name type="common">Xanthomonas campestris pv. vesicatoria</name>
    <dbReference type="NCBI Taxonomy" id="316273"/>
    <lineage>
        <taxon>Bacteria</taxon>
        <taxon>Pseudomonadati</taxon>
        <taxon>Pseudomonadota</taxon>
        <taxon>Gammaproteobacteria</taxon>
        <taxon>Lysobacterales</taxon>
        <taxon>Lysobacteraceae</taxon>
        <taxon>Xanthomonas</taxon>
    </lineage>
</organism>
<name>ATPB_XANE5</name>
<reference key="1">
    <citation type="journal article" date="2005" name="J. Bacteriol.">
        <title>Insights into genome plasticity and pathogenicity of the plant pathogenic Bacterium Xanthomonas campestris pv. vesicatoria revealed by the complete genome sequence.</title>
        <authorList>
            <person name="Thieme F."/>
            <person name="Koebnik R."/>
            <person name="Bekel T."/>
            <person name="Berger C."/>
            <person name="Boch J."/>
            <person name="Buettner D."/>
            <person name="Caldana C."/>
            <person name="Gaigalat L."/>
            <person name="Goesmann A."/>
            <person name="Kay S."/>
            <person name="Kirchner O."/>
            <person name="Lanz C."/>
            <person name="Linke B."/>
            <person name="McHardy A.C."/>
            <person name="Meyer F."/>
            <person name="Mittenhuber G."/>
            <person name="Nies D.H."/>
            <person name="Niesbach-Kloesgen U."/>
            <person name="Patschkowski T."/>
            <person name="Rueckert C."/>
            <person name="Rupp O."/>
            <person name="Schneiker S."/>
            <person name="Schuster S.C."/>
            <person name="Vorhoelter F.J."/>
            <person name="Weber E."/>
            <person name="Puehler A."/>
            <person name="Bonas U."/>
            <person name="Bartels D."/>
            <person name="Kaiser O."/>
        </authorList>
    </citation>
    <scope>NUCLEOTIDE SEQUENCE [LARGE SCALE GENOMIC DNA]</scope>
    <source>
        <strain>85-10</strain>
    </source>
</reference>
<sequence>MSQGKIVQIIGAVVDVEFQRNEVPKVYDALKVEGTAITLEVQQQLGDGVVRTIALGSTDGLKRNLVATNTERAISVPVGAGTLGRIMDVLGRPIDEAGDVQASDHWEIHRSAPSYEDQASTTELLETGIKVIDLMCPFAKGGKVGLFGGAGVGKTVNMMELINNIAKAHSGLSVFAGVGERTREGNDFYHEMKDSNVLDKVAMVYGQMNEPPGNRLRVALTGLTMAEYFRDEKDASGKGKDVLLFVDNIYRYTLAGTEVSALLGRMPSAVGYQPTLAEEMGVLQERITSTKSGSITSIQAVYVPADDLTDPSPATTFAHLDSTVTLSRNIASLGIYPAVDPLDSTSRQMDPLVIGHEHYDTAQRVQQTLQKYKELKDIIAILGMDELSEEDKQSVSRARKIERFFSQPFHVAEVFTGSPGKYVSLKDTIRGFKAICDGEYDHLPEQAFYMVGSIEEAVEKANKMSAKA</sequence>
<comment type="function">
    <text evidence="1">Produces ATP from ADP in the presence of a proton gradient across the membrane. The catalytic sites are hosted primarily by the beta subunits.</text>
</comment>
<comment type="catalytic activity">
    <reaction evidence="1">
        <text>ATP + H2O + 4 H(+)(in) = ADP + phosphate + 5 H(+)(out)</text>
        <dbReference type="Rhea" id="RHEA:57720"/>
        <dbReference type="ChEBI" id="CHEBI:15377"/>
        <dbReference type="ChEBI" id="CHEBI:15378"/>
        <dbReference type="ChEBI" id="CHEBI:30616"/>
        <dbReference type="ChEBI" id="CHEBI:43474"/>
        <dbReference type="ChEBI" id="CHEBI:456216"/>
        <dbReference type="EC" id="7.1.2.2"/>
    </reaction>
</comment>
<comment type="subunit">
    <text evidence="1">F-type ATPases have 2 components, CF(1) - the catalytic core - and CF(0) - the membrane proton channel. CF(1) has five subunits: alpha(3), beta(3), gamma(1), delta(1), epsilon(1). CF(0) has three main subunits: a(1), b(2) and c(9-12). The alpha and beta chains form an alternating ring which encloses part of the gamma chain. CF(1) is attached to CF(0) by a central stalk formed by the gamma and epsilon chains, while a peripheral stalk is formed by the delta and b chains.</text>
</comment>
<comment type="subcellular location">
    <subcellularLocation>
        <location evidence="1">Cell inner membrane</location>
        <topology evidence="1">Peripheral membrane protein</topology>
    </subcellularLocation>
</comment>
<comment type="similarity">
    <text evidence="1">Belongs to the ATPase alpha/beta chains family.</text>
</comment>
<dbReference type="EC" id="7.1.2.2" evidence="1"/>
<dbReference type="EMBL" id="AM039952">
    <property type="protein sequence ID" value="CAJ25498.1"/>
    <property type="molecule type" value="Genomic_DNA"/>
</dbReference>
<dbReference type="RefSeq" id="WP_011348658.1">
    <property type="nucleotide sequence ID" value="NZ_CP017190.1"/>
</dbReference>
<dbReference type="SMR" id="Q3BP15"/>
<dbReference type="STRING" id="456327.BJD11_03830"/>
<dbReference type="KEGG" id="xcv:XCV3767"/>
<dbReference type="eggNOG" id="COG0055">
    <property type="taxonomic scope" value="Bacteria"/>
</dbReference>
<dbReference type="HOGENOM" id="CLU_022398_0_2_6"/>
<dbReference type="Proteomes" id="UP000007069">
    <property type="component" value="Chromosome"/>
</dbReference>
<dbReference type="GO" id="GO:0005886">
    <property type="term" value="C:plasma membrane"/>
    <property type="evidence" value="ECO:0007669"/>
    <property type="project" value="UniProtKB-SubCell"/>
</dbReference>
<dbReference type="GO" id="GO:0045259">
    <property type="term" value="C:proton-transporting ATP synthase complex"/>
    <property type="evidence" value="ECO:0007669"/>
    <property type="project" value="UniProtKB-KW"/>
</dbReference>
<dbReference type="GO" id="GO:0005524">
    <property type="term" value="F:ATP binding"/>
    <property type="evidence" value="ECO:0007669"/>
    <property type="project" value="UniProtKB-UniRule"/>
</dbReference>
<dbReference type="GO" id="GO:0016887">
    <property type="term" value="F:ATP hydrolysis activity"/>
    <property type="evidence" value="ECO:0007669"/>
    <property type="project" value="InterPro"/>
</dbReference>
<dbReference type="GO" id="GO:0046933">
    <property type="term" value="F:proton-transporting ATP synthase activity, rotational mechanism"/>
    <property type="evidence" value="ECO:0007669"/>
    <property type="project" value="UniProtKB-UniRule"/>
</dbReference>
<dbReference type="CDD" id="cd18110">
    <property type="entry name" value="ATP-synt_F1_beta_C"/>
    <property type="match status" value="1"/>
</dbReference>
<dbReference type="CDD" id="cd18115">
    <property type="entry name" value="ATP-synt_F1_beta_N"/>
    <property type="match status" value="1"/>
</dbReference>
<dbReference type="CDD" id="cd01133">
    <property type="entry name" value="F1-ATPase_beta_CD"/>
    <property type="match status" value="1"/>
</dbReference>
<dbReference type="FunFam" id="1.10.1140.10:FF:000001">
    <property type="entry name" value="ATP synthase subunit beta"/>
    <property type="match status" value="1"/>
</dbReference>
<dbReference type="FunFam" id="3.40.50.300:FF:000004">
    <property type="entry name" value="ATP synthase subunit beta"/>
    <property type="match status" value="1"/>
</dbReference>
<dbReference type="Gene3D" id="2.40.10.170">
    <property type="match status" value="1"/>
</dbReference>
<dbReference type="Gene3D" id="1.10.1140.10">
    <property type="entry name" value="Bovine Mitochondrial F1-atpase, Atp Synthase Beta Chain, Chain D, domain 3"/>
    <property type="match status" value="1"/>
</dbReference>
<dbReference type="Gene3D" id="3.40.50.300">
    <property type="entry name" value="P-loop containing nucleotide triphosphate hydrolases"/>
    <property type="match status" value="1"/>
</dbReference>
<dbReference type="HAMAP" id="MF_01347">
    <property type="entry name" value="ATP_synth_beta_bact"/>
    <property type="match status" value="1"/>
</dbReference>
<dbReference type="InterPro" id="IPR003593">
    <property type="entry name" value="AAA+_ATPase"/>
</dbReference>
<dbReference type="InterPro" id="IPR055190">
    <property type="entry name" value="ATP-synt_VA_C"/>
</dbReference>
<dbReference type="InterPro" id="IPR005722">
    <property type="entry name" value="ATP_synth_F1_bsu"/>
</dbReference>
<dbReference type="InterPro" id="IPR020003">
    <property type="entry name" value="ATPase_a/bsu_AS"/>
</dbReference>
<dbReference type="InterPro" id="IPR050053">
    <property type="entry name" value="ATPase_alpha/beta_chains"/>
</dbReference>
<dbReference type="InterPro" id="IPR004100">
    <property type="entry name" value="ATPase_F1/V1/A1_a/bsu_N"/>
</dbReference>
<dbReference type="InterPro" id="IPR036121">
    <property type="entry name" value="ATPase_F1/V1/A1_a/bsu_N_sf"/>
</dbReference>
<dbReference type="InterPro" id="IPR000194">
    <property type="entry name" value="ATPase_F1/V1/A1_a/bsu_nucl-bd"/>
</dbReference>
<dbReference type="InterPro" id="IPR024034">
    <property type="entry name" value="ATPase_F1/V1_b/a_C"/>
</dbReference>
<dbReference type="InterPro" id="IPR027417">
    <property type="entry name" value="P-loop_NTPase"/>
</dbReference>
<dbReference type="NCBIfam" id="TIGR01039">
    <property type="entry name" value="atpD"/>
    <property type="match status" value="1"/>
</dbReference>
<dbReference type="PANTHER" id="PTHR15184">
    <property type="entry name" value="ATP SYNTHASE"/>
    <property type="match status" value="1"/>
</dbReference>
<dbReference type="PANTHER" id="PTHR15184:SF71">
    <property type="entry name" value="ATP SYNTHASE SUBUNIT BETA, MITOCHONDRIAL"/>
    <property type="match status" value="1"/>
</dbReference>
<dbReference type="Pfam" id="PF00006">
    <property type="entry name" value="ATP-synt_ab"/>
    <property type="match status" value="1"/>
</dbReference>
<dbReference type="Pfam" id="PF02874">
    <property type="entry name" value="ATP-synt_ab_N"/>
    <property type="match status" value="1"/>
</dbReference>
<dbReference type="Pfam" id="PF22919">
    <property type="entry name" value="ATP-synt_VA_C"/>
    <property type="match status" value="1"/>
</dbReference>
<dbReference type="SMART" id="SM00382">
    <property type="entry name" value="AAA"/>
    <property type="match status" value="1"/>
</dbReference>
<dbReference type="SUPFAM" id="SSF47917">
    <property type="entry name" value="C-terminal domain of alpha and beta subunits of F1 ATP synthase"/>
    <property type="match status" value="1"/>
</dbReference>
<dbReference type="SUPFAM" id="SSF50615">
    <property type="entry name" value="N-terminal domain of alpha and beta subunits of F1 ATP synthase"/>
    <property type="match status" value="1"/>
</dbReference>
<dbReference type="SUPFAM" id="SSF52540">
    <property type="entry name" value="P-loop containing nucleoside triphosphate hydrolases"/>
    <property type="match status" value="1"/>
</dbReference>
<dbReference type="PROSITE" id="PS00152">
    <property type="entry name" value="ATPASE_ALPHA_BETA"/>
    <property type="match status" value="1"/>
</dbReference>
<accession>Q3BP15</accession>
<evidence type="ECO:0000255" key="1">
    <source>
        <dbReference type="HAMAP-Rule" id="MF_01347"/>
    </source>
</evidence>